<protein>
    <recommendedName>
        <fullName evidence="1">6,7-dimethyl-8-ribityllumazine synthase</fullName>
        <shortName evidence="1">DMRL synthase</shortName>
        <shortName evidence="1">LS</shortName>
        <shortName evidence="1">Lumazine synthase</shortName>
        <ecNumber evidence="1">2.5.1.78</ecNumber>
    </recommendedName>
</protein>
<comment type="function">
    <text evidence="1">Catalyzes the formation of 6,7-dimethyl-8-ribityllumazine by condensation of 5-amino-6-(D-ribitylamino)uracil with 3,4-dihydroxy-2-butanone 4-phosphate. This is the penultimate step in the biosynthesis of riboflavin.</text>
</comment>
<comment type="catalytic activity">
    <reaction evidence="1">
        <text>(2S)-2-hydroxy-3-oxobutyl phosphate + 5-amino-6-(D-ribitylamino)uracil = 6,7-dimethyl-8-(1-D-ribityl)lumazine + phosphate + 2 H2O + H(+)</text>
        <dbReference type="Rhea" id="RHEA:26152"/>
        <dbReference type="ChEBI" id="CHEBI:15377"/>
        <dbReference type="ChEBI" id="CHEBI:15378"/>
        <dbReference type="ChEBI" id="CHEBI:15934"/>
        <dbReference type="ChEBI" id="CHEBI:43474"/>
        <dbReference type="ChEBI" id="CHEBI:58201"/>
        <dbReference type="ChEBI" id="CHEBI:58830"/>
        <dbReference type="EC" id="2.5.1.78"/>
    </reaction>
</comment>
<comment type="pathway">
    <text evidence="1">Cofactor biosynthesis; riboflavin biosynthesis; riboflavin from 2-hydroxy-3-oxobutyl phosphate and 5-amino-6-(D-ribitylamino)uracil: step 1/2.</text>
</comment>
<comment type="subunit">
    <text evidence="1">Forms an icosahedral capsid composed of 60 subunits, arranged as a dodecamer of pentamers.</text>
</comment>
<comment type="similarity">
    <text evidence="1">Belongs to the DMRL synthase family.</text>
</comment>
<keyword id="KW-0686">Riboflavin biosynthesis</keyword>
<keyword id="KW-0808">Transferase</keyword>
<gene>
    <name evidence="1" type="primary">ribH</name>
    <name type="ordered locus">VP0682</name>
</gene>
<evidence type="ECO:0000255" key="1">
    <source>
        <dbReference type="HAMAP-Rule" id="MF_00178"/>
    </source>
</evidence>
<reference key="1">
    <citation type="journal article" date="2003" name="Lancet">
        <title>Genome sequence of Vibrio parahaemolyticus: a pathogenic mechanism distinct from that of V. cholerae.</title>
        <authorList>
            <person name="Makino K."/>
            <person name="Oshima K."/>
            <person name="Kurokawa K."/>
            <person name="Yokoyama K."/>
            <person name="Uda T."/>
            <person name="Tagomori K."/>
            <person name="Iijima Y."/>
            <person name="Najima M."/>
            <person name="Nakano M."/>
            <person name="Yamashita A."/>
            <person name="Kubota Y."/>
            <person name="Kimura S."/>
            <person name="Yasunaga T."/>
            <person name="Honda T."/>
            <person name="Shinagawa H."/>
            <person name="Hattori M."/>
            <person name="Iida T."/>
        </authorList>
    </citation>
    <scope>NUCLEOTIDE SEQUENCE [LARGE SCALE GENOMIC DNA]</scope>
    <source>
        <strain>RIMD 2210633</strain>
    </source>
</reference>
<name>RISB_VIBPA</name>
<proteinExistence type="inferred from homology"/>
<sequence length="156" mass="16432">MKVIEGGFPAPNAKIAIVISRFNSFINESLLSGAIDTLKRHGQVSEDNITVVRCPGAVELPLVAQRVAKTGKYDAIVSLGTVIRGGTPHFDYVCSECNKGLAQVSLEYSLPVAFGVLTVDTIDQAIERAGTKAGNKGAEAALSALEMINVLSEIDS</sequence>
<feature type="chain" id="PRO_0000134828" description="6,7-dimethyl-8-ribityllumazine synthase">
    <location>
        <begin position="1"/>
        <end position="156"/>
    </location>
</feature>
<feature type="active site" description="Proton donor" evidence="1">
    <location>
        <position position="89"/>
    </location>
</feature>
<feature type="binding site" evidence="1">
    <location>
        <position position="22"/>
    </location>
    <ligand>
        <name>5-amino-6-(D-ribitylamino)uracil</name>
        <dbReference type="ChEBI" id="CHEBI:15934"/>
    </ligand>
</feature>
<feature type="binding site" evidence="1">
    <location>
        <begin position="57"/>
        <end position="59"/>
    </location>
    <ligand>
        <name>5-amino-6-(D-ribitylamino)uracil</name>
        <dbReference type="ChEBI" id="CHEBI:15934"/>
    </ligand>
</feature>
<feature type="binding site" evidence="1">
    <location>
        <begin position="81"/>
        <end position="83"/>
    </location>
    <ligand>
        <name>5-amino-6-(D-ribitylamino)uracil</name>
        <dbReference type="ChEBI" id="CHEBI:15934"/>
    </ligand>
</feature>
<feature type="binding site" evidence="1">
    <location>
        <begin position="86"/>
        <end position="87"/>
    </location>
    <ligand>
        <name>(2S)-2-hydroxy-3-oxobutyl phosphate</name>
        <dbReference type="ChEBI" id="CHEBI:58830"/>
    </ligand>
</feature>
<feature type="binding site" evidence="1">
    <location>
        <position position="114"/>
    </location>
    <ligand>
        <name>5-amino-6-(D-ribitylamino)uracil</name>
        <dbReference type="ChEBI" id="CHEBI:15934"/>
    </ligand>
</feature>
<feature type="binding site" evidence="1">
    <location>
        <position position="128"/>
    </location>
    <ligand>
        <name>(2S)-2-hydroxy-3-oxobutyl phosphate</name>
        <dbReference type="ChEBI" id="CHEBI:58830"/>
    </ligand>
</feature>
<organism>
    <name type="scientific">Vibrio parahaemolyticus serotype O3:K6 (strain RIMD 2210633)</name>
    <dbReference type="NCBI Taxonomy" id="223926"/>
    <lineage>
        <taxon>Bacteria</taxon>
        <taxon>Pseudomonadati</taxon>
        <taxon>Pseudomonadota</taxon>
        <taxon>Gammaproteobacteria</taxon>
        <taxon>Vibrionales</taxon>
        <taxon>Vibrionaceae</taxon>
        <taxon>Vibrio</taxon>
    </lineage>
</organism>
<accession>Q87RU4</accession>
<dbReference type="EC" id="2.5.1.78" evidence="1"/>
<dbReference type="EMBL" id="BA000031">
    <property type="protein sequence ID" value="BAC58945.1"/>
    <property type="molecule type" value="Genomic_DNA"/>
</dbReference>
<dbReference type="RefSeq" id="NP_797061.1">
    <property type="nucleotide sequence ID" value="NC_004603.1"/>
</dbReference>
<dbReference type="SMR" id="Q87RU4"/>
<dbReference type="KEGG" id="vpa:VP0682"/>
<dbReference type="PATRIC" id="fig|223926.6.peg.650"/>
<dbReference type="eggNOG" id="COG0054">
    <property type="taxonomic scope" value="Bacteria"/>
</dbReference>
<dbReference type="HOGENOM" id="CLU_089358_1_1_6"/>
<dbReference type="UniPathway" id="UPA00275">
    <property type="reaction ID" value="UER00404"/>
</dbReference>
<dbReference type="PRO" id="PR:Q87RU4"/>
<dbReference type="Proteomes" id="UP000002493">
    <property type="component" value="Chromosome 1"/>
</dbReference>
<dbReference type="GO" id="GO:0005829">
    <property type="term" value="C:cytosol"/>
    <property type="evidence" value="ECO:0007669"/>
    <property type="project" value="TreeGrafter"/>
</dbReference>
<dbReference type="GO" id="GO:0009349">
    <property type="term" value="C:riboflavin synthase complex"/>
    <property type="evidence" value="ECO:0007669"/>
    <property type="project" value="InterPro"/>
</dbReference>
<dbReference type="GO" id="GO:0000906">
    <property type="term" value="F:6,7-dimethyl-8-ribityllumazine synthase activity"/>
    <property type="evidence" value="ECO:0007669"/>
    <property type="project" value="UniProtKB-UniRule"/>
</dbReference>
<dbReference type="GO" id="GO:0009231">
    <property type="term" value="P:riboflavin biosynthetic process"/>
    <property type="evidence" value="ECO:0007669"/>
    <property type="project" value="UniProtKB-UniRule"/>
</dbReference>
<dbReference type="CDD" id="cd09209">
    <property type="entry name" value="Lumazine_synthase-I"/>
    <property type="match status" value="1"/>
</dbReference>
<dbReference type="FunFam" id="3.40.50.960:FF:000001">
    <property type="entry name" value="6,7-dimethyl-8-ribityllumazine synthase"/>
    <property type="match status" value="1"/>
</dbReference>
<dbReference type="Gene3D" id="3.40.50.960">
    <property type="entry name" value="Lumazine/riboflavin synthase"/>
    <property type="match status" value="1"/>
</dbReference>
<dbReference type="HAMAP" id="MF_00178">
    <property type="entry name" value="Lumazine_synth"/>
    <property type="match status" value="1"/>
</dbReference>
<dbReference type="InterPro" id="IPR034964">
    <property type="entry name" value="LS"/>
</dbReference>
<dbReference type="InterPro" id="IPR002180">
    <property type="entry name" value="LS/RS"/>
</dbReference>
<dbReference type="InterPro" id="IPR036467">
    <property type="entry name" value="LS/RS_sf"/>
</dbReference>
<dbReference type="NCBIfam" id="TIGR00114">
    <property type="entry name" value="lumazine-synth"/>
    <property type="match status" value="1"/>
</dbReference>
<dbReference type="NCBIfam" id="NF000812">
    <property type="entry name" value="PRK00061.1-4"/>
    <property type="match status" value="1"/>
</dbReference>
<dbReference type="PANTHER" id="PTHR21058:SF0">
    <property type="entry name" value="6,7-DIMETHYL-8-RIBITYLLUMAZINE SYNTHASE"/>
    <property type="match status" value="1"/>
</dbReference>
<dbReference type="PANTHER" id="PTHR21058">
    <property type="entry name" value="6,7-DIMETHYL-8-RIBITYLLUMAZINE SYNTHASE DMRL SYNTHASE LUMAZINE SYNTHASE"/>
    <property type="match status" value="1"/>
</dbReference>
<dbReference type="Pfam" id="PF00885">
    <property type="entry name" value="DMRL_synthase"/>
    <property type="match status" value="1"/>
</dbReference>
<dbReference type="SUPFAM" id="SSF52121">
    <property type="entry name" value="Lumazine synthase"/>
    <property type="match status" value="1"/>
</dbReference>